<comment type="caution">
    <text evidence="3">Could be the product of a pseudogene.</text>
</comment>
<feature type="chain" id="PRO_0000240835" description="Putative ankyrin repeat domain-containing protein 20A4">
    <location>
        <begin position="1"/>
        <end position="823"/>
    </location>
</feature>
<feature type="repeat" description="ANK 1">
    <location>
        <begin position="66"/>
        <end position="95"/>
    </location>
</feature>
<feature type="repeat" description="ANK 2">
    <location>
        <begin position="99"/>
        <end position="128"/>
    </location>
</feature>
<feature type="repeat" description="ANK 3">
    <location>
        <begin position="132"/>
        <end position="161"/>
    </location>
</feature>
<feature type="repeat" description="ANK 4">
    <location>
        <begin position="165"/>
        <end position="194"/>
    </location>
</feature>
<feature type="repeat" description="ANK 5">
    <location>
        <begin position="198"/>
        <end position="227"/>
    </location>
</feature>
<feature type="region of interest" description="Disordered" evidence="2">
    <location>
        <begin position="301"/>
        <end position="343"/>
    </location>
</feature>
<feature type="region of interest" description="Disordered" evidence="2">
    <location>
        <begin position="356"/>
        <end position="405"/>
    </location>
</feature>
<feature type="coiled-coil region" evidence="1">
    <location>
        <begin position="431"/>
        <end position="480"/>
    </location>
</feature>
<feature type="coiled-coil region" evidence="1">
    <location>
        <begin position="565"/>
        <end position="724"/>
    </location>
</feature>
<feature type="coiled-coil region" evidence="1">
    <location>
        <begin position="776"/>
        <end position="806"/>
    </location>
</feature>
<feature type="compositionally biased region" description="Basic and acidic residues" evidence="2">
    <location>
        <begin position="371"/>
        <end position="384"/>
    </location>
</feature>
<dbReference type="EMBL" id="CR769776">
    <property type="status" value="NOT_ANNOTATED_CDS"/>
    <property type="molecule type" value="Genomic_DNA"/>
</dbReference>
<dbReference type="RefSeq" id="NP_001092275.1">
    <property type="nucleotide sequence ID" value="NM_001098805.1"/>
</dbReference>
<dbReference type="SMR" id="Q4UJ75"/>
<dbReference type="BioGRID" id="609165">
    <property type="interactions" value="5"/>
</dbReference>
<dbReference type="FunCoup" id="Q4UJ75">
    <property type="interactions" value="10"/>
</dbReference>
<dbReference type="IntAct" id="Q4UJ75">
    <property type="interactions" value="4"/>
</dbReference>
<dbReference type="STRING" id="9606.ENSP00000349891"/>
<dbReference type="GlyGen" id="Q4UJ75">
    <property type="glycosylation" value="1 site, 1 O-linked glycan (1 site)"/>
</dbReference>
<dbReference type="iPTMnet" id="Q4UJ75"/>
<dbReference type="PhosphoSitePlus" id="Q4UJ75"/>
<dbReference type="BioMuta" id="ANKRD20A4"/>
<dbReference type="DMDM" id="74753541"/>
<dbReference type="jPOST" id="Q4UJ75"/>
<dbReference type="MassIVE" id="Q4UJ75"/>
<dbReference type="PaxDb" id="9606-ENSP00000349891"/>
<dbReference type="PeptideAtlas" id="Q4UJ75"/>
<dbReference type="Antibodypedia" id="71431">
    <property type="antibodies" value="5 antibodies from 5 providers"/>
</dbReference>
<dbReference type="UCSC" id="uc004afn.4">
    <property type="organism name" value="human"/>
</dbReference>
<dbReference type="AGR" id="HGNC:31982"/>
<dbReference type="GeneCards" id="ANKRD20A4P"/>
<dbReference type="HGNC" id="HGNC:31982">
    <property type="gene designation" value="ANKRD20A4P"/>
</dbReference>
<dbReference type="neXtProt" id="NX_Q4UJ75"/>
<dbReference type="VEuPathDB" id="HostDB:ENSG00000172014"/>
<dbReference type="eggNOG" id="KOG0504">
    <property type="taxonomic scope" value="Eukaryota"/>
</dbReference>
<dbReference type="HOGENOM" id="CLU_001111_3_0_1"/>
<dbReference type="InParanoid" id="Q4UJ75"/>
<dbReference type="OMA" id="NTHMENN"/>
<dbReference type="OrthoDB" id="6577879at2759"/>
<dbReference type="PAN-GO" id="Q4UJ75">
    <property type="GO annotations" value="0 GO annotations based on evolutionary models"/>
</dbReference>
<dbReference type="PhylomeDB" id="Q4UJ75"/>
<dbReference type="TreeFam" id="TF333496"/>
<dbReference type="PathwayCommons" id="Q4UJ75"/>
<dbReference type="SignaLink" id="Q4UJ75"/>
<dbReference type="BioGRID-ORCS" id="728747">
    <property type="hits" value="25 hits in 242 CRISPR screens"/>
</dbReference>
<dbReference type="GenomeRNAi" id="728747"/>
<dbReference type="Pharos" id="Q4UJ75">
    <property type="development level" value="Tdark"/>
</dbReference>
<dbReference type="PRO" id="PR:Q4UJ75"/>
<dbReference type="Proteomes" id="UP000005640">
    <property type="component" value="Chromosome 9"/>
</dbReference>
<dbReference type="RNAct" id="Q4UJ75">
    <property type="molecule type" value="protein"/>
</dbReference>
<dbReference type="Bgee" id="ENSG00000172014">
    <property type="expression patterns" value="Expressed in male germ line stem cell (sensu Vertebrata) in testis and 97 other cell types or tissues"/>
</dbReference>
<dbReference type="ExpressionAtlas" id="Q4UJ75">
    <property type="expression patterns" value="baseline and differential"/>
</dbReference>
<dbReference type="FunFam" id="1.25.40.20:FF:000518">
    <property type="entry name" value="Ankyrin repeat domain-containing protein 20A1"/>
    <property type="match status" value="1"/>
</dbReference>
<dbReference type="FunFam" id="1.25.40.20:FF:000208">
    <property type="entry name" value="Ankyrin repeat domain-containing protein 26"/>
    <property type="match status" value="1"/>
</dbReference>
<dbReference type="Gene3D" id="1.25.40.20">
    <property type="entry name" value="Ankyrin repeat-containing domain"/>
    <property type="match status" value="2"/>
</dbReference>
<dbReference type="InterPro" id="IPR050657">
    <property type="entry name" value="Ankyrin_repeat_domain"/>
</dbReference>
<dbReference type="InterPro" id="IPR002110">
    <property type="entry name" value="Ankyrin_rpt"/>
</dbReference>
<dbReference type="InterPro" id="IPR036770">
    <property type="entry name" value="Ankyrin_rpt-contain_sf"/>
</dbReference>
<dbReference type="InterPro" id="IPR039497">
    <property type="entry name" value="CC144C-like_CC_dom"/>
</dbReference>
<dbReference type="PANTHER" id="PTHR24147">
    <property type="entry name" value="ANKYRIN REPEAT DOMAIN 36-RELATED"/>
    <property type="match status" value="1"/>
</dbReference>
<dbReference type="PANTHER" id="PTHR24147:SF1">
    <property type="entry name" value="ANKYRIN REPEAT DOMAIN-CONTAINING PROTEIN 20A1-RELATED"/>
    <property type="match status" value="1"/>
</dbReference>
<dbReference type="Pfam" id="PF00023">
    <property type="entry name" value="Ank"/>
    <property type="match status" value="3"/>
</dbReference>
<dbReference type="Pfam" id="PF12796">
    <property type="entry name" value="Ank_2"/>
    <property type="match status" value="1"/>
</dbReference>
<dbReference type="Pfam" id="PF14915">
    <property type="entry name" value="CCDC144C"/>
    <property type="match status" value="2"/>
</dbReference>
<dbReference type="PRINTS" id="PR01415">
    <property type="entry name" value="ANKYRIN"/>
</dbReference>
<dbReference type="SMART" id="SM00248">
    <property type="entry name" value="ANK"/>
    <property type="match status" value="6"/>
</dbReference>
<dbReference type="SUPFAM" id="SSF48403">
    <property type="entry name" value="Ankyrin repeat"/>
    <property type="match status" value="1"/>
</dbReference>
<dbReference type="PROSITE" id="PS50297">
    <property type="entry name" value="ANK_REP_REGION"/>
    <property type="match status" value="1"/>
</dbReference>
<dbReference type="PROSITE" id="PS50088">
    <property type="entry name" value="ANK_REPEAT"/>
    <property type="match status" value="4"/>
</dbReference>
<reference key="1">
    <citation type="journal article" date="2004" name="Nature">
        <title>DNA sequence and analysis of human chromosome 9.</title>
        <authorList>
            <person name="Humphray S.J."/>
            <person name="Oliver K."/>
            <person name="Hunt A.R."/>
            <person name="Plumb R.W."/>
            <person name="Loveland J.E."/>
            <person name="Howe K.L."/>
            <person name="Andrews T.D."/>
            <person name="Searle S."/>
            <person name="Hunt S.E."/>
            <person name="Scott C.E."/>
            <person name="Jones M.C."/>
            <person name="Ainscough R."/>
            <person name="Almeida J.P."/>
            <person name="Ambrose K.D."/>
            <person name="Ashwell R.I.S."/>
            <person name="Babbage A.K."/>
            <person name="Babbage S."/>
            <person name="Bagguley C.L."/>
            <person name="Bailey J."/>
            <person name="Banerjee R."/>
            <person name="Barker D.J."/>
            <person name="Barlow K.F."/>
            <person name="Bates K."/>
            <person name="Beasley H."/>
            <person name="Beasley O."/>
            <person name="Bird C.P."/>
            <person name="Bray-Allen S."/>
            <person name="Brown A.J."/>
            <person name="Brown J.Y."/>
            <person name="Burford D."/>
            <person name="Burrill W."/>
            <person name="Burton J."/>
            <person name="Carder C."/>
            <person name="Carter N.P."/>
            <person name="Chapman J.C."/>
            <person name="Chen Y."/>
            <person name="Clarke G."/>
            <person name="Clark S.Y."/>
            <person name="Clee C.M."/>
            <person name="Clegg S."/>
            <person name="Collier R.E."/>
            <person name="Corby N."/>
            <person name="Crosier M."/>
            <person name="Cummings A.T."/>
            <person name="Davies J."/>
            <person name="Dhami P."/>
            <person name="Dunn M."/>
            <person name="Dutta I."/>
            <person name="Dyer L.W."/>
            <person name="Earthrowl M.E."/>
            <person name="Faulkner L."/>
            <person name="Fleming C.J."/>
            <person name="Frankish A."/>
            <person name="Frankland J.A."/>
            <person name="French L."/>
            <person name="Fricker D.G."/>
            <person name="Garner P."/>
            <person name="Garnett J."/>
            <person name="Ghori J."/>
            <person name="Gilbert J.G.R."/>
            <person name="Glison C."/>
            <person name="Grafham D.V."/>
            <person name="Gribble S."/>
            <person name="Griffiths C."/>
            <person name="Griffiths-Jones S."/>
            <person name="Grocock R."/>
            <person name="Guy J."/>
            <person name="Hall R.E."/>
            <person name="Hammond S."/>
            <person name="Harley J.L."/>
            <person name="Harrison E.S.I."/>
            <person name="Hart E.A."/>
            <person name="Heath P.D."/>
            <person name="Henderson C.D."/>
            <person name="Hopkins B.L."/>
            <person name="Howard P.J."/>
            <person name="Howden P.J."/>
            <person name="Huckle E."/>
            <person name="Johnson C."/>
            <person name="Johnson D."/>
            <person name="Joy A.A."/>
            <person name="Kay M."/>
            <person name="Keenan S."/>
            <person name="Kershaw J.K."/>
            <person name="Kimberley A.M."/>
            <person name="King A."/>
            <person name="Knights A."/>
            <person name="Laird G.K."/>
            <person name="Langford C."/>
            <person name="Lawlor S."/>
            <person name="Leongamornlert D.A."/>
            <person name="Leversha M."/>
            <person name="Lloyd C."/>
            <person name="Lloyd D.M."/>
            <person name="Lovell J."/>
            <person name="Martin S."/>
            <person name="Mashreghi-Mohammadi M."/>
            <person name="Matthews L."/>
            <person name="McLaren S."/>
            <person name="McLay K.E."/>
            <person name="McMurray A."/>
            <person name="Milne S."/>
            <person name="Nickerson T."/>
            <person name="Nisbett J."/>
            <person name="Nordsiek G."/>
            <person name="Pearce A.V."/>
            <person name="Peck A.I."/>
            <person name="Porter K.M."/>
            <person name="Pandian R."/>
            <person name="Pelan S."/>
            <person name="Phillimore B."/>
            <person name="Povey S."/>
            <person name="Ramsey Y."/>
            <person name="Rand V."/>
            <person name="Scharfe M."/>
            <person name="Sehra H.K."/>
            <person name="Shownkeen R."/>
            <person name="Sims S.K."/>
            <person name="Skuce C.D."/>
            <person name="Smith M."/>
            <person name="Steward C.A."/>
            <person name="Swarbreck D."/>
            <person name="Sycamore N."/>
            <person name="Tester J."/>
            <person name="Thorpe A."/>
            <person name="Tracey A."/>
            <person name="Tromans A."/>
            <person name="Thomas D.W."/>
            <person name="Wall M."/>
            <person name="Wallis J.M."/>
            <person name="West A.P."/>
            <person name="Whitehead S.L."/>
            <person name="Willey D.L."/>
            <person name="Williams S.A."/>
            <person name="Wilming L."/>
            <person name="Wray P.W."/>
            <person name="Young L."/>
            <person name="Ashurst J.L."/>
            <person name="Coulson A."/>
            <person name="Blocker H."/>
            <person name="Durbin R.M."/>
            <person name="Sulston J.E."/>
            <person name="Hubbard T."/>
            <person name="Jackson M.J."/>
            <person name="Bentley D.R."/>
            <person name="Beck S."/>
            <person name="Rogers J."/>
            <person name="Dunham I."/>
        </authorList>
    </citation>
    <scope>NUCLEOTIDE SEQUENCE [LARGE SCALE GENOMIC DNA]</scope>
</reference>
<sequence length="823" mass="94149">MKLFGFGSRRGQTAQGSIDHVYTGSGYRIRDSELQKIHRAAVKGDAAEVERCLARRSGELDALDKQHRTALHLACASGHVQVVTLLVNRKCQIDVCDKENRTPLIQAVHCQEEACAVILLEHGANPNLKDIYGNTALHYAVYSESTSLAEKLLSHGAHIEALDKDNNTPLLFAIICKKEKMVEFLLKKKASSHAVDRLRRSALMLAVYYDSPGIVNILLKQNIDVFAQDMCGRDAEDYAISHHLTKIQQQILEHKKKILKKEKSDVGSSDESAVSIFHELRVDSLPASDDKDLNVATKQCVPEKVSEPLPGSSHEKGNRIVNGQGEGPPAKHPSLKPSTEVEDPAVKGAVQRKNVQTLRAEQALPVASEEEQQRHERSEKKQPQVKEGNNTNKSEKIQLSENICDSTSSAAAGRLTQQRKIGKTYPQQFPKKLKEEHDRCTLKQENEEKTNVNMLYKKNREELERKEKQYKKEVEAKQLEPTVQSLEMKSKTARNTPNWDFHNHEEMKGLMDENCILKADIAILRQEICTMKNDNLEKENKYLKDIKIVKETNAALEKYIKLNEEMITETAFRYQQELNDLKAENTRLNAELLKEKESKKRLEADIESYQSRLAAAISKHSESVKTERNLKLALERTQDVSVQVEMSSAISKVKDENEFLTEQLSETQIKFNALKDKFRKTRDSLRKKSLALETVQNNLSQTQQQTQEMKEMYQNAEAKVNNSTGKWNCVEERICHLQRENAWLVQQLDDVHQKEDHKEIVTNIQRGFIESGKKDFVLEEKSKKLMNECDHLKESLFQYEREKTEVVVSIKEDKYFQTSRKKI</sequence>
<evidence type="ECO:0000255" key="1"/>
<evidence type="ECO:0000256" key="2">
    <source>
        <dbReference type="SAM" id="MobiDB-lite"/>
    </source>
</evidence>
<evidence type="ECO:0000305" key="3"/>
<evidence type="ECO:0000312" key="4">
    <source>
        <dbReference type="HGNC" id="HGNC:31982"/>
    </source>
</evidence>
<accession>Q4UJ75</accession>
<gene>
    <name evidence="4" type="primary">ANKRD20A4P</name>
    <name type="synonym">ANKRD20A4</name>
</gene>
<organism>
    <name type="scientific">Homo sapiens</name>
    <name type="common">Human</name>
    <dbReference type="NCBI Taxonomy" id="9606"/>
    <lineage>
        <taxon>Eukaryota</taxon>
        <taxon>Metazoa</taxon>
        <taxon>Chordata</taxon>
        <taxon>Craniata</taxon>
        <taxon>Vertebrata</taxon>
        <taxon>Euteleostomi</taxon>
        <taxon>Mammalia</taxon>
        <taxon>Eutheria</taxon>
        <taxon>Euarchontoglires</taxon>
        <taxon>Primates</taxon>
        <taxon>Haplorrhini</taxon>
        <taxon>Catarrhini</taxon>
        <taxon>Hominidae</taxon>
        <taxon>Homo</taxon>
    </lineage>
</organism>
<keyword id="KW-0040">ANK repeat</keyword>
<keyword id="KW-0175">Coiled coil</keyword>
<keyword id="KW-1185">Reference proteome</keyword>
<keyword id="KW-0677">Repeat</keyword>
<name>A20A4_HUMAN</name>
<proteinExistence type="uncertain"/>
<protein>
    <recommendedName>
        <fullName>Putative ankyrin repeat domain-containing protein 20A4</fullName>
    </recommendedName>
    <alternativeName>
        <fullName evidence="4">Ankyrin repeat domain-containing protein 20A4 pseudogene</fullName>
    </alternativeName>
</protein>